<evidence type="ECO:0000250" key="1">
    <source>
        <dbReference type="UniProtKB" id="Q7KU86"/>
    </source>
</evidence>
<evidence type="ECO:0000255" key="2">
    <source>
        <dbReference type="HAMAP-Rule" id="MF_03048"/>
    </source>
</evidence>
<name>URM1_DROYA</name>
<accession>B4PCA1</accession>
<comment type="function">
    <text evidence="2">Acts as a sulfur carrier required for 2-thiolation of mcm(5)S(2)U at tRNA wobble positions of cytosolic tRNA(Lys), tRNA(Glu) and tRNA(Gln). Serves as sulfur donor in tRNA 2-thiolation reaction by being thiocarboxylated (-COSH) at its C-terminus by MOCS3. The sulfur is then transferred to tRNA to form 2-thiolation of mcm(5)S(2)U. Also acts as a ubiquitin-like protein (UBL) that is covalently conjugated via an isopeptide bond to lysine residues of target proteins such as Prx2/Jafrac1, Ciao1, Eip71CD and GILT1. The thiocarboxylated form serves as substrate for conjugation and oxidative stress specifically induces the formation of UBL-protein conjugates.</text>
</comment>
<comment type="pathway">
    <text evidence="2">tRNA modification; 5-methoxycarbonylmethyl-2-thiouridine-tRNA biosynthesis.</text>
</comment>
<comment type="subunit">
    <text evidence="1">Interacts with cer.</text>
</comment>
<comment type="subcellular location">
    <subcellularLocation>
        <location evidence="2">Cytoplasm</location>
    </subcellularLocation>
</comment>
<comment type="PTM">
    <text evidence="2">C-terminal thiocarboxylation occurs in 2 steps, it is first acyl-adenylated (-COAMP) via the hesA/moeB/thiF part of the MOCS3 homolog, then thiocarboxylated (-COSH) via the rhodanese domain of the MOCS3 homolog.</text>
</comment>
<comment type="similarity">
    <text evidence="2">Belongs to the URM1 family.</text>
</comment>
<sequence>MGTPELKIILEFSAGAELLFGNIKRRELVLDGNQKWTIANLLKWMHANILTERPELFLQGDTVRPGILVLINDTDWELLGELDYELQPNDNVLFISTLHGG</sequence>
<proteinExistence type="inferred from homology"/>
<feature type="chain" id="PRO_0000367866" description="Ubiquitin-related modifier 1 homolog">
    <location>
        <begin position="1"/>
        <end position="101"/>
    </location>
</feature>
<feature type="modified residue" description="1-thioglycine" evidence="2">
    <location>
        <position position="101"/>
    </location>
</feature>
<feature type="cross-link" description="Glycyl lysine isopeptide (Gly-Lys) (interchain with K-? in acceptor proteins)" evidence="2">
    <location>
        <position position="101"/>
    </location>
</feature>
<keyword id="KW-0963">Cytoplasm</keyword>
<keyword id="KW-1017">Isopeptide bond</keyword>
<keyword id="KW-0819">tRNA processing</keyword>
<keyword id="KW-0833">Ubl conjugation pathway</keyword>
<reference key="1">
    <citation type="journal article" date="2007" name="Nature">
        <title>Evolution of genes and genomes on the Drosophila phylogeny.</title>
        <authorList>
            <consortium name="Drosophila 12 genomes consortium"/>
        </authorList>
    </citation>
    <scope>NUCLEOTIDE SEQUENCE [LARGE SCALE GENOMIC DNA]</scope>
    <source>
        <strain>Tai18E2 / Tucson 14021-0261.01</strain>
    </source>
</reference>
<protein>
    <recommendedName>
        <fullName evidence="2">Ubiquitin-related modifier 1 homolog</fullName>
    </recommendedName>
</protein>
<organism>
    <name type="scientific">Drosophila yakuba</name>
    <name type="common">Fruit fly</name>
    <dbReference type="NCBI Taxonomy" id="7245"/>
    <lineage>
        <taxon>Eukaryota</taxon>
        <taxon>Metazoa</taxon>
        <taxon>Ecdysozoa</taxon>
        <taxon>Arthropoda</taxon>
        <taxon>Hexapoda</taxon>
        <taxon>Insecta</taxon>
        <taxon>Pterygota</taxon>
        <taxon>Neoptera</taxon>
        <taxon>Endopterygota</taxon>
        <taxon>Diptera</taxon>
        <taxon>Brachycera</taxon>
        <taxon>Muscomorpha</taxon>
        <taxon>Ephydroidea</taxon>
        <taxon>Drosophilidae</taxon>
        <taxon>Drosophila</taxon>
        <taxon>Sophophora</taxon>
    </lineage>
</organism>
<dbReference type="EMBL" id="CM000159">
    <property type="protein sequence ID" value="EDW93786.1"/>
    <property type="molecule type" value="Genomic_DNA"/>
</dbReference>
<dbReference type="SMR" id="B4PCA1"/>
<dbReference type="EnsemblMetazoa" id="FBtr0266917">
    <property type="protein sequence ID" value="FBpp0265409"/>
    <property type="gene ID" value="FBgn0237715"/>
</dbReference>
<dbReference type="EnsemblMetazoa" id="XM_002094038.3">
    <property type="protein sequence ID" value="XP_002094074.2"/>
    <property type="gene ID" value="LOC6533349"/>
</dbReference>
<dbReference type="GeneID" id="6533349"/>
<dbReference type="KEGG" id="dya:Dyak_GE20399"/>
<dbReference type="CTD" id="81605"/>
<dbReference type="eggNOG" id="KOG4146">
    <property type="taxonomic scope" value="Eukaryota"/>
</dbReference>
<dbReference type="HOGENOM" id="CLU_148208_0_1_1"/>
<dbReference type="OMA" id="DYELQPN"/>
<dbReference type="OrthoDB" id="10248987at2759"/>
<dbReference type="PhylomeDB" id="B4PCA1"/>
<dbReference type="UniPathway" id="UPA00988"/>
<dbReference type="Proteomes" id="UP000002282">
    <property type="component" value="Chromosome 3L"/>
</dbReference>
<dbReference type="GO" id="GO:0005829">
    <property type="term" value="C:cytosol"/>
    <property type="evidence" value="ECO:0007669"/>
    <property type="project" value="UniProtKB-UniRule"/>
</dbReference>
<dbReference type="GO" id="GO:0046329">
    <property type="term" value="P:negative regulation of JNK cascade"/>
    <property type="evidence" value="ECO:0007669"/>
    <property type="project" value="EnsemblMetazoa"/>
</dbReference>
<dbReference type="GO" id="GO:0032447">
    <property type="term" value="P:protein urmylation"/>
    <property type="evidence" value="ECO:0007669"/>
    <property type="project" value="UniProtKB-UniRule"/>
</dbReference>
<dbReference type="GO" id="GO:0034227">
    <property type="term" value="P:tRNA thio-modification"/>
    <property type="evidence" value="ECO:0007669"/>
    <property type="project" value="UniProtKB-UniRule"/>
</dbReference>
<dbReference type="GO" id="GO:0002098">
    <property type="term" value="P:tRNA wobble uridine modification"/>
    <property type="evidence" value="ECO:0007669"/>
    <property type="project" value="UniProtKB-UniRule"/>
</dbReference>
<dbReference type="CDD" id="cd01764">
    <property type="entry name" value="Ubl_Urm1"/>
    <property type="match status" value="1"/>
</dbReference>
<dbReference type="FunFam" id="3.10.20.30:FF:000021">
    <property type="entry name" value="Ubiquitin-related modifier 1"/>
    <property type="match status" value="1"/>
</dbReference>
<dbReference type="Gene3D" id="3.10.20.30">
    <property type="match status" value="1"/>
</dbReference>
<dbReference type="HAMAP" id="MF_03048">
    <property type="entry name" value="Urm1"/>
    <property type="match status" value="1"/>
</dbReference>
<dbReference type="InterPro" id="IPR012675">
    <property type="entry name" value="Beta-grasp_dom_sf"/>
</dbReference>
<dbReference type="InterPro" id="IPR016155">
    <property type="entry name" value="Mopterin_synth/thiamin_S_b"/>
</dbReference>
<dbReference type="InterPro" id="IPR015221">
    <property type="entry name" value="Urm1"/>
</dbReference>
<dbReference type="PANTHER" id="PTHR14986">
    <property type="entry name" value="RURM1 PROTEIN"/>
    <property type="match status" value="1"/>
</dbReference>
<dbReference type="Pfam" id="PF09138">
    <property type="entry name" value="Urm1"/>
    <property type="match status" value="1"/>
</dbReference>
<dbReference type="PIRSF" id="PIRSF037379">
    <property type="entry name" value="Ubiquitin-related_modifier_1"/>
    <property type="match status" value="1"/>
</dbReference>
<dbReference type="SUPFAM" id="SSF54285">
    <property type="entry name" value="MoaD/ThiS"/>
    <property type="match status" value="1"/>
</dbReference>
<gene>
    <name evidence="1" type="primary">Urm1</name>
    <name type="ORF">GE20399</name>
</gene>